<protein>
    <recommendedName>
        <fullName evidence="1">Small ribosomal subunit protein bS21</fullName>
    </recommendedName>
    <alternativeName>
        <fullName evidence="3">30S ribosomal protein S21</fullName>
    </alternativeName>
</protein>
<reference key="1">
    <citation type="journal article" date="2009" name="BMC Genomics">
        <title>Evidence for niche adaptation in the genome of the bovine pathogen Streptococcus uberis.</title>
        <authorList>
            <person name="Ward P.N."/>
            <person name="Holden M.T.G."/>
            <person name="Leigh J.A."/>
            <person name="Lennard N."/>
            <person name="Bignell A."/>
            <person name="Barron A."/>
            <person name="Clark L."/>
            <person name="Quail M.A."/>
            <person name="Woodward J."/>
            <person name="Barrell B.G."/>
            <person name="Egan S.A."/>
            <person name="Field T.R."/>
            <person name="Maskell D."/>
            <person name="Kehoe M."/>
            <person name="Dowson C.G."/>
            <person name="Chanter N."/>
            <person name="Whatmore A.M."/>
            <person name="Bentley S.D."/>
            <person name="Parkhill J."/>
        </authorList>
    </citation>
    <scope>NUCLEOTIDE SEQUENCE [LARGE SCALE GENOMIC DNA]</scope>
    <source>
        <strain>ATCC BAA-854 / 0140J</strain>
    </source>
</reference>
<feature type="chain" id="PRO_1000133491" description="Small ribosomal subunit protein bS21">
    <location>
        <begin position="1"/>
        <end position="58"/>
    </location>
</feature>
<feature type="region of interest" description="Disordered" evidence="2">
    <location>
        <begin position="36"/>
        <end position="58"/>
    </location>
</feature>
<feature type="compositionally biased region" description="Basic residues" evidence="2">
    <location>
        <begin position="43"/>
        <end position="58"/>
    </location>
</feature>
<name>RS21_STRU0</name>
<organism>
    <name type="scientific">Streptococcus uberis (strain ATCC BAA-854 / 0140J)</name>
    <dbReference type="NCBI Taxonomy" id="218495"/>
    <lineage>
        <taxon>Bacteria</taxon>
        <taxon>Bacillati</taxon>
        <taxon>Bacillota</taxon>
        <taxon>Bacilli</taxon>
        <taxon>Lactobacillales</taxon>
        <taxon>Streptococcaceae</taxon>
        <taxon>Streptococcus</taxon>
    </lineage>
</organism>
<comment type="similarity">
    <text evidence="1">Belongs to the bacterial ribosomal protein bS21 family.</text>
</comment>
<gene>
    <name evidence="1" type="primary">rpsU</name>
    <name type="ordered locus">SUB0689</name>
</gene>
<sequence length="58" mass="6972">MSKTVVRKNESLDDALRRFKRSVTKAGTLQESRKREFYEKPSVKRKRKSEAARKRKKF</sequence>
<proteinExistence type="inferred from homology"/>
<dbReference type="EMBL" id="AM946015">
    <property type="protein sequence ID" value="CAR41588.1"/>
    <property type="molecule type" value="Genomic_DNA"/>
</dbReference>
<dbReference type="RefSeq" id="WP_000048058.1">
    <property type="nucleotide sequence ID" value="NC_012004.1"/>
</dbReference>
<dbReference type="SMR" id="B9DRV3"/>
<dbReference type="STRING" id="218495.SUB0689"/>
<dbReference type="GeneID" id="93936799"/>
<dbReference type="KEGG" id="sub:SUB0689"/>
<dbReference type="eggNOG" id="COG0828">
    <property type="taxonomic scope" value="Bacteria"/>
</dbReference>
<dbReference type="HOGENOM" id="CLU_159258_3_2_9"/>
<dbReference type="OrthoDB" id="9799244at2"/>
<dbReference type="Proteomes" id="UP000000449">
    <property type="component" value="Chromosome"/>
</dbReference>
<dbReference type="GO" id="GO:1990904">
    <property type="term" value="C:ribonucleoprotein complex"/>
    <property type="evidence" value="ECO:0007669"/>
    <property type="project" value="UniProtKB-KW"/>
</dbReference>
<dbReference type="GO" id="GO:0005840">
    <property type="term" value="C:ribosome"/>
    <property type="evidence" value="ECO:0007669"/>
    <property type="project" value="UniProtKB-KW"/>
</dbReference>
<dbReference type="GO" id="GO:0003735">
    <property type="term" value="F:structural constituent of ribosome"/>
    <property type="evidence" value="ECO:0007669"/>
    <property type="project" value="InterPro"/>
</dbReference>
<dbReference type="GO" id="GO:0006412">
    <property type="term" value="P:translation"/>
    <property type="evidence" value="ECO:0007669"/>
    <property type="project" value="UniProtKB-UniRule"/>
</dbReference>
<dbReference type="Gene3D" id="1.20.5.1150">
    <property type="entry name" value="Ribosomal protein S8"/>
    <property type="match status" value="1"/>
</dbReference>
<dbReference type="HAMAP" id="MF_00358">
    <property type="entry name" value="Ribosomal_bS21"/>
    <property type="match status" value="1"/>
</dbReference>
<dbReference type="InterPro" id="IPR001911">
    <property type="entry name" value="Ribosomal_bS21"/>
</dbReference>
<dbReference type="InterPro" id="IPR018278">
    <property type="entry name" value="Ribosomal_bS21_CS"/>
</dbReference>
<dbReference type="InterPro" id="IPR038380">
    <property type="entry name" value="Ribosomal_bS21_sf"/>
</dbReference>
<dbReference type="NCBIfam" id="TIGR00030">
    <property type="entry name" value="S21p"/>
    <property type="match status" value="1"/>
</dbReference>
<dbReference type="PANTHER" id="PTHR21109">
    <property type="entry name" value="MITOCHONDRIAL 28S RIBOSOMAL PROTEIN S21"/>
    <property type="match status" value="1"/>
</dbReference>
<dbReference type="PANTHER" id="PTHR21109:SF22">
    <property type="entry name" value="SMALL RIBOSOMAL SUBUNIT PROTEIN BS21"/>
    <property type="match status" value="1"/>
</dbReference>
<dbReference type="Pfam" id="PF01165">
    <property type="entry name" value="Ribosomal_S21"/>
    <property type="match status" value="1"/>
</dbReference>
<dbReference type="PRINTS" id="PR00976">
    <property type="entry name" value="RIBOSOMALS21"/>
</dbReference>
<dbReference type="PROSITE" id="PS01181">
    <property type="entry name" value="RIBOSOMAL_S21"/>
    <property type="match status" value="1"/>
</dbReference>
<keyword id="KW-1185">Reference proteome</keyword>
<keyword id="KW-0687">Ribonucleoprotein</keyword>
<keyword id="KW-0689">Ribosomal protein</keyword>
<accession>B9DRV3</accession>
<evidence type="ECO:0000255" key="1">
    <source>
        <dbReference type="HAMAP-Rule" id="MF_00358"/>
    </source>
</evidence>
<evidence type="ECO:0000256" key="2">
    <source>
        <dbReference type="SAM" id="MobiDB-lite"/>
    </source>
</evidence>
<evidence type="ECO:0000305" key="3"/>